<keyword id="KW-0963">Cytoplasm</keyword>
<keyword id="KW-1185">Reference proteome</keyword>
<keyword id="KW-0690">Ribosome biogenesis</keyword>
<gene>
    <name evidence="1" type="primary">rimP</name>
    <name type="ordered locus">AHA_3305</name>
</gene>
<dbReference type="EMBL" id="CP000462">
    <property type="protein sequence ID" value="ABK36854.1"/>
    <property type="status" value="ALT_INIT"/>
    <property type="molecule type" value="Genomic_DNA"/>
</dbReference>
<dbReference type="RefSeq" id="WP_016351719.1">
    <property type="nucleotide sequence ID" value="NC_008570.1"/>
</dbReference>
<dbReference type="RefSeq" id="YP_857796.1">
    <property type="nucleotide sequence ID" value="NC_008570.1"/>
</dbReference>
<dbReference type="SMR" id="A0KNE5"/>
<dbReference type="STRING" id="380703.AHA_3305"/>
<dbReference type="EnsemblBacteria" id="ABK36854">
    <property type="protein sequence ID" value="ABK36854"/>
    <property type="gene ID" value="AHA_3305"/>
</dbReference>
<dbReference type="GeneID" id="4490967"/>
<dbReference type="KEGG" id="aha:AHA_3305"/>
<dbReference type="PATRIC" id="fig|380703.7.peg.3301"/>
<dbReference type="eggNOG" id="COG0779">
    <property type="taxonomic scope" value="Bacteria"/>
</dbReference>
<dbReference type="HOGENOM" id="CLU_070525_1_1_6"/>
<dbReference type="OrthoDB" id="9805006at2"/>
<dbReference type="Proteomes" id="UP000000756">
    <property type="component" value="Chromosome"/>
</dbReference>
<dbReference type="GO" id="GO:0005829">
    <property type="term" value="C:cytosol"/>
    <property type="evidence" value="ECO:0007669"/>
    <property type="project" value="TreeGrafter"/>
</dbReference>
<dbReference type="GO" id="GO:0000028">
    <property type="term" value="P:ribosomal small subunit assembly"/>
    <property type="evidence" value="ECO:0007669"/>
    <property type="project" value="TreeGrafter"/>
</dbReference>
<dbReference type="GO" id="GO:0006412">
    <property type="term" value="P:translation"/>
    <property type="evidence" value="ECO:0007669"/>
    <property type="project" value="TreeGrafter"/>
</dbReference>
<dbReference type="CDD" id="cd01734">
    <property type="entry name" value="YlxS_C"/>
    <property type="match status" value="1"/>
</dbReference>
<dbReference type="FunFam" id="3.30.300.70:FF:000001">
    <property type="entry name" value="Ribosome maturation factor RimP"/>
    <property type="match status" value="1"/>
</dbReference>
<dbReference type="Gene3D" id="2.30.30.180">
    <property type="entry name" value="Ribosome maturation factor RimP, C-terminal domain"/>
    <property type="match status" value="1"/>
</dbReference>
<dbReference type="Gene3D" id="3.30.300.70">
    <property type="entry name" value="RimP-like superfamily, N-terminal"/>
    <property type="match status" value="1"/>
</dbReference>
<dbReference type="HAMAP" id="MF_01077">
    <property type="entry name" value="RimP"/>
    <property type="match status" value="1"/>
</dbReference>
<dbReference type="InterPro" id="IPR003728">
    <property type="entry name" value="Ribosome_maturation_RimP"/>
</dbReference>
<dbReference type="InterPro" id="IPR028998">
    <property type="entry name" value="RimP_C"/>
</dbReference>
<dbReference type="InterPro" id="IPR036847">
    <property type="entry name" value="RimP_C_sf"/>
</dbReference>
<dbReference type="InterPro" id="IPR028989">
    <property type="entry name" value="RimP_N"/>
</dbReference>
<dbReference type="InterPro" id="IPR035956">
    <property type="entry name" value="RimP_N_sf"/>
</dbReference>
<dbReference type="NCBIfam" id="NF000927">
    <property type="entry name" value="PRK00092.1-1"/>
    <property type="match status" value="1"/>
</dbReference>
<dbReference type="NCBIfam" id="NF011233">
    <property type="entry name" value="PRK14640.1"/>
    <property type="match status" value="1"/>
</dbReference>
<dbReference type="PANTHER" id="PTHR33867">
    <property type="entry name" value="RIBOSOME MATURATION FACTOR RIMP"/>
    <property type="match status" value="1"/>
</dbReference>
<dbReference type="PANTHER" id="PTHR33867:SF1">
    <property type="entry name" value="RIBOSOME MATURATION FACTOR RIMP"/>
    <property type="match status" value="1"/>
</dbReference>
<dbReference type="Pfam" id="PF17384">
    <property type="entry name" value="DUF150_C"/>
    <property type="match status" value="1"/>
</dbReference>
<dbReference type="Pfam" id="PF02576">
    <property type="entry name" value="RimP_N"/>
    <property type="match status" value="1"/>
</dbReference>
<dbReference type="SUPFAM" id="SSF74942">
    <property type="entry name" value="YhbC-like, C-terminal domain"/>
    <property type="match status" value="1"/>
</dbReference>
<dbReference type="SUPFAM" id="SSF75420">
    <property type="entry name" value="YhbC-like, N-terminal domain"/>
    <property type="match status" value="1"/>
</dbReference>
<evidence type="ECO:0000255" key="1">
    <source>
        <dbReference type="HAMAP-Rule" id="MF_01077"/>
    </source>
</evidence>
<evidence type="ECO:0000305" key="2"/>
<protein>
    <recommendedName>
        <fullName evidence="1">Ribosome maturation factor RimP</fullName>
    </recommendedName>
</protein>
<feature type="chain" id="PRO_0000384591" description="Ribosome maturation factor RimP">
    <location>
        <begin position="1"/>
        <end position="152"/>
    </location>
</feature>
<name>RIMP_AERHH</name>
<organism>
    <name type="scientific">Aeromonas hydrophila subsp. hydrophila (strain ATCC 7966 / DSM 30187 / BCRC 13018 / CCUG 14551 / JCM 1027 / KCTC 2358 / NCIMB 9240 / NCTC 8049)</name>
    <dbReference type="NCBI Taxonomy" id="380703"/>
    <lineage>
        <taxon>Bacteria</taxon>
        <taxon>Pseudomonadati</taxon>
        <taxon>Pseudomonadota</taxon>
        <taxon>Gammaproteobacteria</taxon>
        <taxon>Aeromonadales</taxon>
        <taxon>Aeromonadaceae</taxon>
        <taxon>Aeromonas</taxon>
    </lineage>
</organism>
<sequence length="152" mass="16841">MATLEQRLTDLLEAPVVALGFELWGIEFIRAGKHSTLRVYIDGEHGVSVENCAEVSHQVGAIMDVEDPITEEYYLEVSSPGLDRPLFKVAQFEKYVGQEAAVTLRMATNNRRKFKGVIKAVQGDMITLTVDGKDEVLAFTNIQKANIVPNFG</sequence>
<reference key="1">
    <citation type="journal article" date="2006" name="J. Bacteriol.">
        <title>Genome sequence of Aeromonas hydrophila ATCC 7966T: jack of all trades.</title>
        <authorList>
            <person name="Seshadri R."/>
            <person name="Joseph S.W."/>
            <person name="Chopra A.K."/>
            <person name="Sha J."/>
            <person name="Shaw J."/>
            <person name="Graf J."/>
            <person name="Haft D.H."/>
            <person name="Wu M."/>
            <person name="Ren Q."/>
            <person name="Rosovitz M.J."/>
            <person name="Madupu R."/>
            <person name="Tallon L."/>
            <person name="Kim M."/>
            <person name="Jin S."/>
            <person name="Vuong H."/>
            <person name="Stine O.C."/>
            <person name="Ali A."/>
            <person name="Horneman A.J."/>
            <person name="Heidelberg J.F."/>
        </authorList>
    </citation>
    <scope>NUCLEOTIDE SEQUENCE [LARGE SCALE GENOMIC DNA]</scope>
    <source>
        <strain>ATCC 7966 / DSM 30187 / BCRC 13018 / CCUG 14551 / JCM 1027 / KCTC 2358 / NCIMB 9240 / NCTC 8049</strain>
    </source>
</reference>
<proteinExistence type="inferred from homology"/>
<comment type="function">
    <text evidence="1">Required for maturation of 30S ribosomal subunits.</text>
</comment>
<comment type="subcellular location">
    <subcellularLocation>
        <location evidence="1">Cytoplasm</location>
    </subcellularLocation>
</comment>
<comment type="similarity">
    <text evidence="1">Belongs to the RimP family.</text>
</comment>
<comment type="sequence caution" evidence="2">
    <conflict type="erroneous initiation">
        <sequence resource="EMBL-CDS" id="ABK36854"/>
    </conflict>
</comment>
<accession>A0KNE5</accession>